<protein>
    <recommendedName>
        <fullName>RNA pseudouridine synthase 5</fullName>
        <ecNumber>5.4.99.-</ecNumber>
    </recommendedName>
    <alternativeName>
        <fullName>RNA pseudouridylate synthase 5</fullName>
    </alternativeName>
    <alternativeName>
        <fullName>RNA-uridine isomerase 5</fullName>
    </alternativeName>
</protein>
<organism>
    <name type="scientific">Oryza sativa subsp. japonica</name>
    <name type="common">Rice</name>
    <dbReference type="NCBI Taxonomy" id="39947"/>
    <lineage>
        <taxon>Eukaryota</taxon>
        <taxon>Viridiplantae</taxon>
        <taxon>Streptophyta</taxon>
        <taxon>Embryophyta</taxon>
        <taxon>Tracheophyta</taxon>
        <taxon>Spermatophyta</taxon>
        <taxon>Magnoliopsida</taxon>
        <taxon>Liliopsida</taxon>
        <taxon>Poales</taxon>
        <taxon>Poaceae</taxon>
        <taxon>BOP clade</taxon>
        <taxon>Oryzoideae</taxon>
        <taxon>Oryzeae</taxon>
        <taxon>Oryzinae</taxon>
        <taxon>Oryza</taxon>
        <taxon>Oryza sativa</taxon>
    </lineage>
</organism>
<accession>Q0DST9</accession>
<accession>Q10MZ8</accession>
<sequence length="397" mass="43696">MTAAAAAGEIPAEDAPPPGALYSFGTPWPEFNEGISYIDTFRCADAGATTTLIEFYSTSYKSSAPLPGWIKRIRDGQITVDGEVATDPDMILREGSKLVYHRLPWQEPFAPHLLDVLYEDDDMIALNKPSGLQVLPKGLFQQRTVLAQLQLKDWKMPSSFCSKRKDAQSHPVPVHRLGRGTSGLLLCAKTKLAKAQLAAYFAEGATNAGKSRDETDICKARKISKFYRALVTGILENDEVMITQPIGLVRYPGVAEGLYAACSSGKPAMSKVRVLERLKIHNHTLIQVEIHSGRPHQIRIHLAYIGHPLVDDPLYGIGGQPKFDEPEPTSTADSFAYDGGYERPLQPVPGDCGYHLHAHWLVLCHPTTNEMIKITAPLPHILQTREEQQDTAKLLGG</sequence>
<dbReference type="EC" id="5.4.99.-"/>
<dbReference type="EMBL" id="DP000009">
    <property type="protein sequence ID" value="ABF95377.1"/>
    <property type="status" value="ALT_SEQ"/>
    <property type="molecule type" value="Genomic_DNA"/>
</dbReference>
<dbReference type="EMBL" id="AP008209">
    <property type="protein sequence ID" value="BAF11699.1"/>
    <property type="status" value="ALT_SEQ"/>
    <property type="molecule type" value="Genomic_DNA"/>
</dbReference>
<dbReference type="EMBL" id="AP014959">
    <property type="status" value="NOT_ANNOTATED_CDS"/>
    <property type="molecule type" value="Genomic_DNA"/>
</dbReference>
<dbReference type="EMBL" id="CM000140">
    <property type="status" value="NOT_ANNOTATED_CDS"/>
    <property type="molecule type" value="Genomic_DNA"/>
</dbReference>
<dbReference type="RefSeq" id="XP_015631154.1">
    <property type="nucleotide sequence ID" value="XM_015775668.1"/>
</dbReference>
<dbReference type="SMR" id="Q0DST9"/>
<dbReference type="FunCoup" id="Q0DST9">
    <property type="interactions" value="250"/>
</dbReference>
<dbReference type="STRING" id="39947.Q0DST9"/>
<dbReference type="PaxDb" id="39947-Q0DST9"/>
<dbReference type="KEGG" id="dosa:Os03g0288500"/>
<dbReference type="eggNOG" id="KOG1919">
    <property type="taxonomic scope" value="Eukaryota"/>
</dbReference>
<dbReference type="InParanoid" id="Q0DST9"/>
<dbReference type="OrthoDB" id="428658at2759"/>
<dbReference type="Proteomes" id="UP000000763">
    <property type="component" value="Chromosome 3"/>
</dbReference>
<dbReference type="Proteomes" id="UP000007752">
    <property type="component" value="Chromosome 3"/>
</dbReference>
<dbReference type="Proteomes" id="UP000059680">
    <property type="component" value="Chromosome 3"/>
</dbReference>
<dbReference type="GO" id="GO:0009982">
    <property type="term" value="F:pseudouridine synthase activity"/>
    <property type="evidence" value="ECO:0000318"/>
    <property type="project" value="GO_Central"/>
</dbReference>
<dbReference type="GO" id="GO:0003723">
    <property type="term" value="F:RNA binding"/>
    <property type="evidence" value="ECO:0007669"/>
    <property type="project" value="UniProtKB-KW"/>
</dbReference>
<dbReference type="GO" id="GO:0000455">
    <property type="term" value="P:enzyme-directed rRNA pseudouridine synthesis"/>
    <property type="evidence" value="ECO:0000318"/>
    <property type="project" value="GO_Central"/>
</dbReference>
<dbReference type="CDD" id="cd02869">
    <property type="entry name" value="PseudoU_synth_RluA_like"/>
    <property type="match status" value="1"/>
</dbReference>
<dbReference type="CDD" id="cd00165">
    <property type="entry name" value="S4"/>
    <property type="match status" value="1"/>
</dbReference>
<dbReference type="Gene3D" id="3.30.2350.10">
    <property type="entry name" value="Pseudouridine synthase"/>
    <property type="match status" value="1"/>
</dbReference>
<dbReference type="InterPro" id="IPR020103">
    <property type="entry name" value="PsdUridine_synth_cat_dom_sf"/>
</dbReference>
<dbReference type="InterPro" id="IPR006224">
    <property type="entry name" value="PsdUridine_synth_RluA-like_CS"/>
</dbReference>
<dbReference type="InterPro" id="IPR006145">
    <property type="entry name" value="PsdUridine_synth_RsuA/RluA"/>
</dbReference>
<dbReference type="InterPro" id="IPR050188">
    <property type="entry name" value="RluA_PseudoU_synthase"/>
</dbReference>
<dbReference type="PANTHER" id="PTHR21600">
    <property type="entry name" value="MITOCHONDRIAL RNA PSEUDOURIDINE SYNTHASE"/>
    <property type="match status" value="1"/>
</dbReference>
<dbReference type="PANTHER" id="PTHR21600:SF88">
    <property type="entry name" value="RNA PSEUDOURIDINE SYNTHASE 5"/>
    <property type="match status" value="1"/>
</dbReference>
<dbReference type="Pfam" id="PF00849">
    <property type="entry name" value="PseudoU_synth_2"/>
    <property type="match status" value="1"/>
</dbReference>
<dbReference type="SUPFAM" id="SSF55120">
    <property type="entry name" value="Pseudouridine synthase"/>
    <property type="match status" value="1"/>
</dbReference>
<dbReference type="PROSITE" id="PS01129">
    <property type="entry name" value="PSI_RLU"/>
    <property type="match status" value="1"/>
</dbReference>
<keyword id="KW-0413">Isomerase</keyword>
<keyword id="KW-1185">Reference proteome</keyword>
<keyword id="KW-0694">RNA-binding</keyword>
<reference key="1">
    <citation type="journal article" date="2005" name="Genome Res.">
        <title>Sequence, annotation, and analysis of synteny between rice chromosome 3 and diverged grass species.</title>
        <authorList>
            <consortium name="The rice chromosome 3 sequencing consortium"/>
            <person name="Buell C.R."/>
            <person name="Yuan Q."/>
            <person name="Ouyang S."/>
            <person name="Liu J."/>
            <person name="Zhu W."/>
            <person name="Wang A."/>
            <person name="Maiti R."/>
            <person name="Haas B."/>
            <person name="Wortman J."/>
            <person name="Pertea M."/>
            <person name="Jones K.M."/>
            <person name="Kim M."/>
            <person name="Overton L."/>
            <person name="Tsitrin T."/>
            <person name="Fadrosh D."/>
            <person name="Bera J."/>
            <person name="Weaver B."/>
            <person name="Jin S."/>
            <person name="Johri S."/>
            <person name="Reardon M."/>
            <person name="Webb K."/>
            <person name="Hill J."/>
            <person name="Moffat K."/>
            <person name="Tallon L."/>
            <person name="Van Aken S."/>
            <person name="Lewis M."/>
            <person name="Utterback T."/>
            <person name="Feldblyum T."/>
            <person name="Zismann V."/>
            <person name="Iobst S."/>
            <person name="Hsiao J."/>
            <person name="de Vazeille A.R."/>
            <person name="Salzberg S.L."/>
            <person name="White O."/>
            <person name="Fraser C.M."/>
            <person name="Yu Y."/>
            <person name="Kim H."/>
            <person name="Rambo T."/>
            <person name="Currie J."/>
            <person name="Collura K."/>
            <person name="Kernodle-Thompson S."/>
            <person name="Wei F."/>
            <person name="Kudrna K."/>
            <person name="Ammiraju J.S.S."/>
            <person name="Luo M."/>
            <person name="Goicoechea J.L."/>
            <person name="Wing R.A."/>
            <person name="Henry D."/>
            <person name="Oates R."/>
            <person name="Palmer M."/>
            <person name="Pries G."/>
            <person name="Saski C."/>
            <person name="Simmons J."/>
            <person name="Soderlund C."/>
            <person name="Nelson W."/>
            <person name="de la Bastide M."/>
            <person name="Spiegel L."/>
            <person name="Nascimento L."/>
            <person name="Huang E."/>
            <person name="Preston R."/>
            <person name="Zutavern T."/>
            <person name="Palmer L."/>
            <person name="O'Shaughnessy A."/>
            <person name="Dike S."/>
            <person name="McCombie W.R."/>
            <person name="Minx P."/>
            <person name="Cordum H."/>
            <person name="Wilson R."/>
            <person name="Jin W."/>
            <person name="Lee H.R."/>
            <person name="Jiang J."/>
            <person name="Jackson S."/>
        </authorList>
    </citation>
    <scope>NUCLEOTIDE SEQUENCE [LARGE SCALE GENOMIC DNA]</scope>
    <source>
        <strain>cv. Nipponbare</strain>
    </source>
</reference>
<reference key="2">
    <citation type="journal article" date="2005" name="Nature">
        <title>The map-based sequence of the rice genome.</title>
        <authorList>
            <consortium name="International rice genome sequencing project (IRGSP)"/>
        </authorList>
    </citation>
    <scope>NUCLEOTIDE SEQUENCE [LARGE SCALE GENOMIC DNA]</scope>
    <source>
        <strain>cv. Nipponbare</strain>
    </source>
</reference>
<reference key="3">
    <citation type="journal article" date="2008" name="Nucleic Acids Res.">
        <title>The rice annotation project database (RAP-DB): 2008 update.</title>
        <authorList>
            <consortium name="The rice annotation project (RAP)"/>
        </authorList>
    </citation>
    <scope>GENOME REANNOTATION</scope>
    <source>
        <strain>cv. Nipponbare</strain>
    </source>
</reference>
<reference key="4">
    <citation type="journal article" date="2013" name="Rice">
        <title>Improvement of the Oryza sativa Nipponbare reference genome using next generation sequence and optical map data.</title>
        <authorList>
            <person name="Kawahara Y."/>
            <person name="de la Bastide M."/>
            <person name="Hamilton J.P."/>
            <person name="Kanamori H."/>
            <person name="McCombie W.R."/>
            <person name="Ouyang S."/>
            <person name="Schwartz D.C."/>
            <person name="Tanaka T."/>
            <person name="Wu J."/>
            <person name="Zhou S."/>
            <person name="Childs K.L."/>
            <person name="Davidson R.M."/>
            <person name="Lin H."/>
            <person name="Quesada-Ocampo L."/>
            <person name="Vaillancourt B."/>
            <person name="Sakai H."/>
            <person name="Lee S.S."/>
            <person name="Kim J."/>
            <person name="Numa H."/>
            <person name="Itoh T."/>
            <person name="Buell C.R."/>
            <person name="Matsumoto T."/>
        </authorList>
    </citation>
    <scope>GENOME REANNOTATION</scope>
    <source>
        <strain>cv. Nipponbare</strain>
    </source>
</reference>
<reference key="5">
    <citation type="journal article" date="2005" name="PLoS Biol.">
        <title>The genomes of Oryza sativa: a history of duplications.</title>
        <authorList>
            <person name="Yu J."/>
            <person name="Wang J."/>
            <person name="Lin W."/>
            <person name="Li S."/>
            <person name="Li H."/>
            <person name="Zhou J."/>
            <person name="Ni P."/>
            <person name="Dong W."/>
            <person name="Hu S."/>
            <person name="Zeng C."/>
            <person name="Zhang J."/>
            <person name="Zhang Y."/>
            <person name="Li R."/>
            <person name="Xu Z."/>
            <person name="Li S."/>
            <person name="Li X."/>
            <person name="Zheng H."/>
            <person name="Cong L."/>
            <person name="Lin L."/>
            <person name="Yin J."/>
            <person name="Geng J."/>
            <person name="Li G."/>
            <person name="Shi J."/>
            <person name="Liu J."/>
            <person name="Lv H."/>
            <person name="Li J."/>
            <person name="Wang J."/>
            <person name="Deng Y."/>
            <person name="Ran L."/>
            <person name="Shi X."/>
            <person name="Wang X."/>
            <person name="Wu Q."/>
            <person name="Li C."/>
            <person name="Ren X."/>
            <person name="Wang J."/>
            <person name="Wang X."/>
            <person name="Li D."/>
            <person name="Liu D."/>
            <person name="Zhang X."/>
            <person name="Ji Z."/>
            <person name="Zhao W."/>
            <person name="Sun Y."/>
            <person name="Zhang Z."/>
            <person name="Bao J."/>
            <person name="Han Y."/>
            <person name="Dong L."/>
            <person name="Ji J."/>
            <person name="Chen P."/>
            <person name="Wu S."/>
            <person name="Liu J."/>
            <person name="Xiao Y."/>
            <person name="Bu D."/>
            <person name="Tan J."/>
            <person name="Yang L."/>
            <person name="Ye C."/>
            <person name="Zhang J."/>
            <person name="Xu J."/>
            <person name="Zhou Y."/>
            <person name="Yu Y."/>
            <person name="Zhang B."/>
            <person name="Zhuang S."/>
            <person name="Wei H."/>
            <person name="Liu B."/>
            <person name="Lei M."/>
            <person name="Yu H."/>
            <person name="Li Y."/>
            <person name="Xu H."/>
            <person name="Wei S."/>
            <person name="He X."/>
            <person name="Fang L."/>
            <person name="Zhang Z."/>
            <person name="Zhang Y."/>
            <person name="Huang X."/>
            <person name="Su Z."/>
            <person name="Tong W."/>
            <person name="Li J."/>
            <person name="Tong Z."/>
            <person name="Li S."/>
            <person name="Ye J."/>
            <person name="Wang L."/>
            <person name="Fang L."/>
            <person name="Lei T."/>
            <person name="Chen C.-S."/>
            <person name="Chen H.-C."/>
            <person name="Xu Z."/>
            <person name="Li H."/>
            <person name="Huang H."/>
            <person name="Zhang F."/>
            <person name="Xu H."/>
            <person name="Li N."/>
            <person name="Zhao C."/>
            <person name="Li S."/>
            <person name="Dong L."/>
            <person name="Huang Y."/>
            <person name="Li L."/>
            <person name="Xi Y."/>
            <person name="Qi Q."/>
            <person name="Li W."/>
            <person name="Zhang B."/>
            <person name="Hu W."/>
            <person name="Zhang Y."/>
            <person name="Tian X."/>
            <person name="Jiao Y."/>
            <person name="Liang X."/>
            <person name="Jin J."/>
            <person name="Gao L."/>
            <person name="Zheng W."/>
            <person name="Hao B."/>
            <person name="Liu S.-M."/>
            <person name="Wang W."/>
            <person name="Yuan L."/>
            <person name="Cao M."/>
            <person name="McDermott J."/>
            <person name="Samudrala R."/>
            <person name="Wang J."/>
            <person name="Wong G.K.-S."/>
            <person name="Yang H."/>
        </authorList>
    </citation>
    <scope>NUCLEOTIDE SEQUENCE [LARGE SCALE GENOMIC DNA]</scope>
    <source>
        <strain>cv. Nipponbare</strain>
    </source>
</reference>
<feature type="chain" id="PRO_0000368026" description="RNA pseudouridine synthase 5">
    <location>
        <begin position="1"/>
        <end position="397"/>
    </location>
</feature>
<feature type="domain" description="S4 RNA-binding">
    <location>
        <begin position="64"/>
        <end position="114"/>
    </location>
</feature>
<gene>
    <name type="ordered locus">Os03g0288500</name>
    <name type="ordered locus">LOC_Os03g17920</name>
    <name type="ORF">OsJ_010020</name>
</gene>
<evidence type="ECO:0000305" key="1"/>
<name>PUS5_ORYSJ</name>
<proteinExistence type="evidence at transcript level"/>
<comment type="catalytic activity">
    <reaction>
        <text>a uridine in RNA = a pseudouridine in RNA</text>
        <dbReference type="Rhea" id="RHEA:48348"/>
        <dbReference type="Rhea" id="RHEA-COMP:12068"/>
        <dbReference type="Rhea" id="RHEA-COMP:12069"/>
        <dbReference type="ChEBI" id="CHEBI:65314"/>
        <dbReference type="ChEBI" id="CHEBI:65315"/>
    </reaction>
</comment>
<comment type="similarity">
    <text evidence="1">Belongs to the pseudouridine synthase RluA family.</text>
</comment>
<comment type="sequence caution" evidence="1">
    <conflict type="erroneous gene model prediction">
        <sequence resource="EMBL-CDS" id="ABF95377"/>
    </conflict>
</comment>
<comment type="sequence caution" evidence="1">
    <conflict type="erroneous gene model prediction">
        <sequence resource="EMBL-CDS" id="BAF11699"/>
    </conflict>
</comment>